<organism evidence="9">
    <name type="scientific">Arabidopsis thaliana</name>
    <name type="common">Mouse-ear cress</name>
    <dbReference type="NCBI Taxonomy" id="3702"/>
    <lineage>
        <taxon>Eukaryota</taxon>
        <taxon>Viridiplantae</taxon>
        <taxon>Streptophyta</taxon>
        <taxon>Embryophyta</taxon>
        <taxon>Tracheophyta</taxon>
        <taxon>Spermatophyta</taxon>
        <taxon>Magnoliopsida</taxon>
        <taxon>eudicotyledons</taxon>
        <taxon>Gunneridae</taxon>
        <taxon>Pentapetalae</taxon>
        <taxon>rosids</taxon>
        <taxon>malvids</taxon>
        <taxon>Brassicales</taxon>
        <taxon>Brassicaceae</taxon>
        <taxon>Camelineae</taxon>
        <taxon>Arabidopsis</taxon>
    </lineage>
</organism>
<comment type="function">
    <text evidence="2 4">F(1)F(0) ATP synthase produces ATP from ADP in the presence of a proton or sodium gradient. F-type ATPases consist of two structural domains, F(1) containing the extramembraneous catalytic core and F(0) containing the membrane proton channel, linked together by a central stalk and a peripheral stalk. During catalysis, ATP synthesis in the catalytic domain of F(1) is coupled via a rotary mechanism of the central stalk subunits to proton translocation (Potential). Essential for photosynthesis, probably by facilitating electron transport in both photosystems I and II (PubMed:12970486).</text>
</comment>
<comment type="function">
    <text evidence="2">This protein is part of the stalk that links CF(0) to CF(1). It either transmits conformational changes from CF(0) to CF(1) or is implicated in proton conduction.</text>
</comment>
<comment type="subunit">
    <text evidence="2">F-type ATPases have 2 components, F(1) - the catalytic core - and F(0) - the membrane proton channel. F(1) has five subunits: alpha(3), beta(3), gamma(1), delta(1), epsilon(1). CF(0) has four main subunits: a(1), b(1), b'(1) and c(10-14). The alpha and beta chains form an alternating ring which encloses part of the gamma chain. F(1) is attached to F(0) by a central stalk formed by the gamma and epsilon chains, while a peripheral stalk is formed by the delta, b and b' chains.</text>
</comment>
<comment type="interaction">
    <interactant intactId="EBI-25516560">
        <id>Q9SSS9</id>
    </interactant>
    <interactant intactId="EBI-25506855">
        <id>O23160</id>
        <label>MYB73</label>
    </interactant>
    <organismsDiffer>false</organismsDiffer>
    <experiments>3</experiments>
</comment>
<comment type="interaction">
    <interactant intactId="EBI-25516560">
        <id>Q9SSS9</id>
    </interactant>
    <interactant intactId="EBI-4426557">
        <id>Q84MB2</id>
        <label>TIFY8</label>
    </interactant>
    <organismsDiffer>false</organismsDiffer>
    <experiments>3</experiments>
</comment>
<comment type="subcellular location">
    <subcellularLocation>
        <location evidence="2 5">Plastid</location>
        <location evidence="2 5">Chloroplast thylakoid membrane</location>
        <topology evidence="2 5">Peripheral membrane protein</topology>
    </subcellularLocation>
</comment>
<comment type="disruption phenotype">
    <text evidence="4">Seedling lethal. High-chlorophyll (Chl)-fluorescence phenotype associated with an increase in non-photochemical quenching of Chl fluorescence and a higher de-epoxidation state of xanthophyll cycle pigments under low light. Impaired electron flow in photosystems I and II.</text>
</comment>
<comment type="similarity">
    <text evidence="2">Belongs to the ATPase delta chain family.</text>
</comment>
<comment type="sequence caution" evidence="6">
    <conflict type="erroneous initiation">
        <sequence resource="EMBL-CDS" id="AAL69493"/>
    </conflict>
    <text>Extended N-terminus.</text>
</comment>
<name>ATPD_ARATH</name>
<keyword id="KW-0007">Acetylation</keyword>
<keyword id="KW-0066">ATP synthesis</keyword>
<keyword id="KW-0139">CF(1)</keyword>
<keyword id="KW-0150">Chloroplast</keyword>
<keyword id="KW-0325">Glycoprotein</keyword>
<keyword id="KW-0375">Hydrogen ion transport</keyword>
<keyword id="KW-0406">Ion transport</keyword>
<keyword id="KW-0472">Membrane</keyword>
<keyword id="KW-0597">Phosphoprotein</keyword>
<keyword id="KW-0602">Photosynthesis</keyword>
<keyword id="KW-0934">Plastid</keyword>
<keyword id="KW-1185">Reference proteome</keyword>
<keyword id="KW-0793">Thylakoid</keyword>
<keyword id="KW-0809">Transit peptide</keyword>
<keyword id="KW-0813">Transport</keyword>
<sequence length="234" mass="25669">MASLQQTLFSLQSKLPPSSFQIARSLPLRKTFPIRINNGGNAAGARMSATAASSYAMALADVAKRNDTMELTVTDIEKLEQVFSDPQVLNFFANPTITVEKKRQVIDDIVKSSSLQSHTSNFLNVLVDANRINIVTEIVKEFELVYNKLTDTQLAEVRSVVKLEAPQLAQIAKQVQKLTGAKNVRVKTVIDASLVAGFTIRYGESGSKLIDMSVKKQLEDIASQLELGEIQLAT</sequence>
<protein>
    <recommendedName>
        <fullName evidence="2">ATP synthase subunit delta, chloroplastic</fullName>
    </recommendedName>
    <alternativeName>
        <fullName evidence="2">ATP synthase F(1) sector subunit delta</fullName>
    </alternativeName>
    <alternativeName>
        <fullName evidence="2">F-type ATPase subunit delta</fullName>
    </alternativeName>
</protein>
<evidence type="ECO:0000255" key="1"/>
<evidence type="ECO:0000255" key="2">
    <source>
        <dbReference type="HAMAP-Rule" id="MF_01416"/>
    </source>
</evidence>
<evidence type="ECO:0000255" key="3">
    <source>
        <dbReference type="PROSITE-ProRule" id="PRU00498"/>
    </source>
</evidence>
<evidence type="ECO:0000269" key="4">
    <source>
    </source>
</evidence>
<evidence type="ECO:0000269" key="5">
    <source>
    </source>
</evidence>
<evidence type="ECO:0000305" key="6"/>
<evidence type="ECO:0000312" key="7">
    <source>
        <dbReference type="Araport" id="AT4G09650"/>
    </source>
</evidence>
<evidence type="ECO:0000312" key="8">
    <source>
        <dbReference type="EMBL" id="CAB82132.1"/>
    </source>
</evidence>
<evidence type="ECO:0000312" key="9">
    <source>
        <dbReference type="Proteomes" id="UP000006548"/>
    </source>
</evidence>
<evidence type="ECO:0007744" key="10">
    <source>
    </source>
</evidence>
<evidence type="ECO:0007744" key="11">
    <source>
    </source>
</evidence>
<gene>
    <name evidence="2" type="primary">ATPD</name>
    <name evidence="7" type="ordered locus">At4g09650</name>
    <name evidence="8" type="ORF">T25P22.90</name>
</gene>
<dbReference type="EMBL" id="AL161515">
    <property type="protein sequence ID" value="CAB78088.1"/>
    <property type="molecule type" value="Genomic_DNA"/>
</dbReference>
<dbReference type="EMBL" id="AL161831">
    <property type="protein sequence ID" value="CAB82132.1"/>
    <property type="molecule type" value="Genomic_DNA"/>
</dbReference>
<dbReference type="EMBL" id="CP002687">
    <property type="protein sequence ID" value="AEE82777.1"/>
    <property type="molecule type" value="Genomic_DNA"/>
</dbReference>
<dbReference type="EMBL" id="AY065158">
    <property type="protein sequence ID" value="AAL38334.1"/>
    <property type="molecule type" value="mRNA"/>
</dbReference>
<dbReference type="EMBL" id="AY074525">
    <property type="protein sequence ID" value="AAL69493.1"/>
    <property type="status" value="ALT_INIT"/>
    <property type="molecule type" value="mRNA"/>
</dbReference>
<dbReference type="EMBL" id="AY114577">
    <property type="protein sequence ID" value="AAM47896.1"/>
    <property type="molecule type" value="mRNA"/>
</dbReference>
<dbReference type="EMBL" id="AY123002">
    <property type="protein sequence ID" value="AAM67535.1"/>
    <property type="molecule type" value="mRNA"/>
</dbReference>
<dbReference type="EMBL" id="AY087900">
    <property type="protein sequence ID" value="AAM65451.1"/>
    <property type="molecule type" value="mRNA"/>
</dbReference>
<dbReference type="PIR" id="G85098">
    <property type="entry name" value="G85098"/>
</dbReference>
<dbReference type="RefSeq" id="NP_192703.1">
    <property type="nucleotide sequence ID" value="NM_117033.3"/>
</dbReference>
<dbReference type="SMR" id="Q9SSS9"/>
<dbReference type="FunCoup" id="Q9SSS9">
    <property type="interactions" value="891"/>
</dbReference>
<dbReference type="IntAct" id="Q9SSS9">
    <property type="interactions" value="2"/>
</dbReference>
<dbReference type="STRING" id="3702.Q9SSS9"/>
<dbReference type="GlyCosmos" id="Q9SSS9">
    <property type="glycosylation" value="1 site, No reported glycans"/>
</dbReference>
<dbReference type="GlyGen" id="Q9SSS9">
    <property type="glycosylation" value="1 site"/>
</dbReference>
<dbReference type="iPTMnet" id="Q9SSS9"/>
<dbReference type="MetOSite" id="Q9SSS9"/>
<dbReference type="PaxDb" id="3702-AT4G09650.1"/>
<dbReference type="ProteomicsDB" id="241003"/>
<dbReference type="EnsemblPlants" id="AT4G09650.1">
    <property type="protein sequence ID" value="AT4G09650.1"/>
    <property type="gene ID" value="AT4G09650"/>
</dbReference>
<dbReference type="GeneID" id="826551"/>
<dbReference type="Gramene" id="AT4G09650.1">
    <property type="protein sequence ID" value="AT4G09650.1"/>
    <property type="gene ID" value="AT4G09650"/>
</dbReference>
<dbReference type="KEGG" id="ath:AT4G09650"/>
<dbReference type="Araport" id="AT4G09650"/>
<dbReference type="TAIR" id="AT4G09650">
    <property type="gene designation" value="ATPD"/>
</dbReference>
<dbReference type="eggNOG" id="KOG1662">
    <property type="taxonomic scope" value="Eukaryota"/>
</dbReference>
<dbReference type="HOGENOM" id="CLU_085114_1_0_1"/>
<dbReference type="InParanoid" id="Q9SSS9"/>
<dbReference type="OMA" id="FPIRINN"/>
<dbReference type="OrthoDB" id="1262810at2759"/>
<dbReference type="PhylomeDB" id="Q9SSS9"/>
<dbReference type="BioCyc" id="ARA:AT4G09650-MONOMER"/>
<dbReference type="CD-CODE" id="4299E36E">
    <property type="entry name" value="Nucleolus"/>
</dbReference>
<dbReference type="PRO" id="PR:Q9SSS9"/>
<dbReference type="Proteomes" id="UP000006548">
    <property type="component" value="Chromosome 4"/>
</dbReference>
<dbReference type="ExpressionAtlas" id="Q9SSS9">
    <property type="expression patterns" value="baseline and differential"/>
</dbReference>
<dbReference type="GO" id="GO:0009507">
    <property type="term" value="C:chloroplast"/>
    <property type="evidence" value="ECO:0007005"/>
    <property type="project" value="TAIR"/>
</dbReference>
<dbReference type="GO" id="GO:0009941">
    <property type="term" value="C:chloroplast envelope"/>
    <property type="evidence" value="ECO:0007005"/>
    <property type="project" value="TAIR"/>
</dbReference>
<dbReference type="GO" id="GO:0009534">
    <property type="term" value="C:chloroplast thylakoid"/>
    <property type="evidence" value="ECO:0007005"/>
    <property type="project" value="TAIR"/>
</dbReference>
<dbReference type="GO" id="GO:0009535">
    <property type="term" value="C:chloroplast thylakoid membrane"/>
    <property type="evidence" value="ECO:0007005"/>
    <property type="project" value="TAIR"/>
</dbReference>
<dbReference type="GO" id="GO:0005829">
    <property type="term" value="C:cytosol"/>
    <property type="evidence" value="ECO:0007005"/>
    <property type="project" value="TAIR"/>
</dbReference>
<dbReference type="GO" id="GO:0010287">
    <property type="term" value="C:plastoglobule"/>
    <property type="evidence" value="ECO:0007005"/>
    <property type="project" value="TAIR"/>
</dbReference>
<dbReference type="GO" id="GO:0045259">
    <property type="term" value="C:proton-transporting ATP synthase complex"/>
    <property type="evidence" value="ECO:0007669"/>
    <property type="project" value="UniProtKB-KW"/>
</dbReference>
<dbReference type="GO" id="GO:0010319">
    <property type="term" value="C:stromule"/>
    <property type="evidence" value="ECO:0000314"/>
    <property type="project" value="TAIR"/>
</dbReference>
<dbReference type="GO" id="GO:0009579">
    <property type="term" value="C:thylakoid"/>
    <property type="evidence" value="ECO:0007005"/>
    <property type="project" value="TAIR"/>
</dbReference>
<dbReference type="GO" id="GO:0003729">
    <property type="term" value="F:mRNA binding"/>
    <property type="evidence" value="ECO:0000314"/>
    <property type="project" value="TAIR"/>
</dbReference>
<dbReference type="GO" id="GO:0046933">
    <property type="term" value="F:proton-transporting ATP synthase activity, rotational mechanism"/>
    <property type="evidence" value="ECO:0007669"/>
    <property type="project" value="InterPro"/>
</dbReference>
<dbReference type="GO" id="GO:0015979">
    <property type="term" value="P:photosynthesis"/>
    <property type="evidence" value="ECO:0000315"/>
    <property type="project" value="TAIR"/>
</dbReference>
<dbReference type="GO" id="GO:0009773">
    <property type="term" value="P:photosynthetic electron transport in photosystem I"/>
    <property type="evidence" value="ECO:0000315"/>
    <property type="project" value="TAIR"/>
</dbReference>
<dbReference type="GO" id="GO:0009772">
    <property type="term" value="P:photosynthetic electron transport in photosystem II"/>
    <property type="evidence" value="ECO:0000315"/>
    <property type="project" value="TAIR"/>
</dbReference>
<dbReference type="GO" id="GO:0009409">
    <property type="term" value="P:response to cold"/>
    <property type="evidence" value="ECO:0000270"/>
    <property type="project" value="TAIR"/>
</dbReference>
<dbReference type="Gene3D" id="1.10.520.20">
    <property type="entry name" value="N-terminal domain of the delta subunit of the F1F0-ATP synthase"/>
    <property type="match status" value="1"/>
</dbReference>
<dbReference type="HAMAP" id="MF_01416">
    <property type="entry name" value="ATP_synth_delta_bact"/>
    <property type="match status" value="1"/>
</dbReference>
<dbReference type="InterPro" id="IPR026015">
    <property type="entry name" value="ATP_synth_OSCP/delta_N_sf"/>
</dbReference>
<dbReference type="InterPro" id="IPR020781">
    <property type="entry name" value="ATPase_OSCP/d_CS"/>
</dbReference>
<dbReference type="InterPro" id="IPR000711">
    <property type="entry name" value="ATPase_OSCP/dsu"/>
</dbReference>
<dbReference type="NCBIfam" id="TIGR01145">
    <property type="entry name" value="ATP_synt_delta"/>
    <property type="match status" value="1"/>
</dbReference>
<dbReference type="PANTHER" id="PTHR11910">
    <property type="entry name" value="ATP SYNTHASE DELTA CHAIN"/>
    <property type="match status" value="1"/>
</dbReference>
<dbReference type="Pfam" id="PF00213">
    <property type="entry name" value="OSCP"/>
    <property type="match status" value="1"/>
</dbReference>
<dbReference type="PRINTS" id="PR00125">
    <property type="entry name" value="ATPASEDELTA"/>
</dbReference>
<dbReference type="SUPFAM" id="SSF47928">
    <property type="entry name" value="N-terminal domain of the delta subunit of the F1F0-ATP synthase"/>
    <property type="match status" value="1"/>
</dbReference>
<dbReference type="PROSITE" id="PS00389">
    <property type="entry name" value="ATPASE_DELTA"/>
    <property type="match status" value="1"/>
</dbReference>
<reference key="1">
    <citation type="journal article" date="1999" name="Nature">
        <title>Sequence and analysis of chromosome 4 of the plant Arabidopsis thaliana.</title>
        <authorList>
            <person name="Mayer K.F.X."/>
            <person name="Schueller C."/>
            <person name="Wambutt R."/>
            <person name="Murphy G."/>
            <person name="Volckaert G."/>
            <person name="Pohl T."/>
            <person name="Duesterhoeft A."/>
            <person name="Stiekema W."/>
            <person name="Entian K.-D."/>
            <person name="Terryn N."/>
            <person name="Harris B."/>
            <person name="Ansorge W."/>
            <person name="Brandt P."/>
            <person name="Grivell L.A."/>
            <person name="Rieger M."/>
            <person name="Weichselgartner M."/>
            <person name="de Simone V."/>
            <person name="Obermaier B."/>
            <person name="Mache R."/>
            <person name="Mueller M."/>
            <person name="Kreis M."/>
            <person name="Delseny M."/>
            <person name="Puigdomenech P."/>
            <person name="Watson M."/>
            <person name="Schmidtheini T."/>
            <person name="Reichert B."/>
            <person name="Portetelle D."/>
            <person name="Perez-Alonso M."/>
            <person name="Boutry M."/>
            <person name="Bancroft I."/>
            <person name="Vos P."/>
            <person name="Hoheisel J."/>
            <person name="Zimmermann W."/>
            <person name="Wedler H."/>
            <person name="Ridley P."/>
            <person name="Langham S.-A."/>
            <person name="McCullagh B."/>
            <person name="Bilham L."/>
            <person name="Robben J."/>
            <person name="van der Schueren J."/>
            <person name="Grymonprez B."/>
            <person name="Chuang Y.-J."/>
            <person name="Vandenbussche F."/>
            <person name="Braeken M."/>
            <person name="Weltjens I."/>
            <person name="Voet M."/>
            <person name="Bastiaens I."/>
            <person name="Aert R."/>
            <person name="Defoor E."/>
            <person name="Weitzenegger T."/>
            <person name="Bothe G."/>
            <person name="Ramsperger U."/>
            <person name="Hilbert H."/>
            <person name="Braun M."/>
            <person name="Holzer E."/>
            <person name="Brandt A."/>
            <person name="Peters S."/>
            <person name="van Staveren M."/>
            <person name="Dirkse W."/>
            <person name="Mooijman P."/>
            <person name="Klein Lankhorst R."/>
            <person name="Rose M."/>
            <person name="Hauf J."/>
            <person name="Koetter P."/>
            <person name="Berneiser S."/>
            <person name="Hempel S."/>
            <person name="Feldpausch M."/>
            <person name="Lamberth S."/>
            <person name="Van den Daele H."/>
            <person name="De Keyser A."/>
            <person name="Buysshaert C."/>
            <person name="Gielen J."/>
            <person name="Villarroel R."/>
            <person name="De Clercq R."/>
            <person name="van Montagu M."/>
            <person name="Rogers J."/>
            <person name="Cronin A."/>
            <person name="Quail M.A."/>
            <person name="Bray-Allen S."/>
            <person name="Clark L."/>
            <person name="Doggett J."/>
            <person name="Hall S."/>
            <person name="Kay M."/>
            <person name="Lennard N."/>
            <person name="McLay K."/>
            <person name="Mayes R."/>
            <person name="Pettett A."/>
            <person name="Rajandream M.A."/>
            <person name="Lyne M."/>
            <person name="Benes V."/>
            <person name="Rechmann S."/>
            <person name="Borkova D."/>
            <person name="Bloecker H."/>
            <person name="Scharfe M."/>
            <person name="Grimm M."/>
            <person name="Loehnert T.-H."/>
            <person name="Dose S."/>
            <person name="de Haan M."/>
            <person name="Maarse A.C."/>
            <person name="Schaefer M."/>
            <person name="Mueller-Auer S."/>
            <person name="Gabel C."/>
            <person name="Fuchs M."/>
            <person name="Fartmann B."/>
            <person name="Granderath K."/>
            <person name="Dauner D."/>
            <person name="Herzl A."/>
            <person name="Neumann S."/>
            <person name="Argiriou A."/>
            <person name="Vitale D."/>
            <person name="Liguori R."/>
            <person name="Piravandi E."/>
            <person name="Massenet O."/>
            <person name="Quigley F."/>
            <person name="Clabauld G."/>
            <person name="Muendlein A."/>
            <person name="Felber R."/>
            <person name="Schnabl S."/>
            <person name="Hiller R."/>
            <person name="Schmidt W."/>
            <person name="Lecharny A."/>
            <person name="Aubourg S."/>
            <person name="Chefdor F."/>
            <person name="Cooke R."/>
            <person name="Berger C."/>
            <person name="Monfort A."/>
            <person name="Casacuberta E."/>
            <person name="Gibbons T."/>
            <person name="Weber N."/>
            <person name="Vandenbol M."/>
            <person name="Bargues M."/>
            <person name="Terol J."/>
            <person name="Torres A."/>
            <person name="Perez-Perez A."/>
            <person name="Purnelle B."/>
            <person name="Bent E."/>
            <person name="Johnson S."/>
            <person name="Tacon D."/>
            <person name="Jesse T."/>
            <person name="Heijnen L."/>
            <person name="Schwarz S."/>
            <person name="Scholler P."/>
            <person name="Heber S."/>
            <person name="Francs P."/>
            <person name="Bielke C."/>
            <person name="Frishman D."/>
            <person name="Haase D."/>
            <person name="Lemcke K."/>
            <person name="Mewes H.-W."/>
            <person name="Stocker S."/>
            <person name="Zaccaria P."/>
            <person name="Bevan M."/>
            <person name="Wilson R.K."/>
            <person name="de la Bastide M."/>
            <person name="Habermann K."/>
            <person name="Parnell L."/>
            <person name="Dedhia N."/>
            <person name="Gnoj L."/>
            <person name="Schutz K."/>
            <person name="Huang E."/>
            <person name="Spiegel L."/>
            <person name="Sekhon M."/>
            <person name="Murray J."/>
            <person name="Sheet P."/>
            <person name="Cordes M."/>
            <person name="Abu-Threideh J."/>
            <person name="Stoneking T."/>
            <person name="Kalicki J."/>
            <person name="Graves T."/>
            <person name="Harmon G."/>
            <person name="Edwards J."/>
            <person name="Latreille P."/>
            <person name="Courtney L."/>
            <person name="Cloud J."/>
            <person name="Abbott A."/>
            <person name="Scott K."/>
            <person name="Johnson D."/>
            <person name="Minx P."/>
            <person name="Bentley D."/>
            <person name="Fulton B."/>
            <person name="Miller N."/>
            <person name="Greco T."/>
            <person name="Kemp K."/>
            <person name="Kramer J."/>
            <person name="Fulton L."/>
            <person name="Mardis E."/>
            <person name="Dante M."/>
            <person name="Pepin K."/>
            <person name="Hillier L.W."/>
            <person name="Nelson J."/>
            <person name="Spieth J."/>
            <person name="Ryan E."/>
            <person name="Andrews S."/>
            <person name="Geisel C."/>
            <person name="Layman D."/>
            <person name="Du H."/>
            <person name="Ali J."/>
            <person name="Berghoff A."/>
            <person name="Jones K."/>
            <person name="Drone K."/>
            <person name="Cotton M."/>
            <person name="Joshu C."/>
            <person name="Antonoiu B."/>
            <person name="Zidanic M."/>
            <person name="Strong C."/>
            <person name="Sun H."/>
            <person name="Lamar B."/>
            <person name="Yordan C."/>
            <person name="Ma P."/>
            <person name="Zhong J."/>
            <person name="Preston R."/>
            <person name="Vil D."/>
            <person name="Shekher M."/>
            <person name="Matero A."/>
            <person name="Shah R."/>
            <person name="Swaby I.K."/>
            <person name="O'Shaughnessy A."/>
            <person name="Rodriguez M."/>
            <person name="Hoffman J."/>
            <person name="Till S."/>
            <person name="Granat S."/>
            <person name="Shohdy N."/>
            <person name="Hasegawa A."/>
            <person name="Hameed A."/>
            <person name="Lodhi M."/>
            <person name="Johnson A."/>
            <person name="Chen E."/>
            <person name="Marra M.A."/>
            <person name="Martienssen R."/>
            <person name="McCombie W.R."/>
        </authorList>
    </citation>
    <scope>NUCLEOTIDE SEQUENCE [LARGE SCALE GENOMIC DNA]</scope>
    <source>
        <strain>cv. Columbia</strain>
    </source>
</reference>
<reference key="2">
    <citation type="journal article" date="2017" name="Plant J.">
        <title>Araport11: a complete reannotation of the Arabidopsis thaliana reference genome.</title>
        <authorList>
            <person name="Cheng C.Y."/>
            <person name="Krishnakumar V."/>
            <person name="Chan A.P."/>
            <person name="Thibaud-Nissen F."/>
            <person name="Schobel S."/>
            <person name="Town C.D."/>
        </authorList>
    </citation>
    <scope>GENOME REANNOTATION</scope>
    <source>
        <strain>cv. Columbia</strain>
    </source>
</reference>
<reference key="3">
    <citation type="journal article" date="2003" name="Science">
        <title>Empirical analysis of transcriptional activity in the Arabidopsis genome.</title>
        <authorList>
            <person name="Yamada K."/>
            <person name="Lim J."/>
            <person name="Dale J.M."/>
            <person name="Chen H."/>
            <person name="Shinn P."/>
            <person name="Palm C.J."/>
            <person name="Southwick A.M."/>
            <person name="Wu H.C."/>
            <person name="Kim C.J."/>
            <person name="Nguyen M."/>
            <person name="Pham P.K."/>
            <person name="Cheuk R.F."/>
            <person name="Karlin-Newmann G."/>
            <person name="Liu S.X."/>
            <person name="Lam B."/>
            <person name="Sakano H."/>
            <person name="Wu T."/>
            <person name="Yu G."/>
            <person name="Miranda M."/>
            <person name="Quach H.L."/>
            <person name="Tripp M."/>
            <person name="Chang C.H."/>
            <person name="Lee J.M."/>
            <person name="Toriumi M.J."/>
            <person name="Chan M.M."/>
            <person name="Tang C.C."/>
            <person name="Onodera C.S."/>
            <person name="Deng J.M."/>
            <person name="Akiyama K."/>
            <person name="Ansari Y."/>
            <person name="Arakawa T."/>
            <person name="Banh J."/>
            <person name="Banno F."/>
            <person name="Bowser L."/>
            <person name="Brooks S.Y."/>
            <person name="Carninci P."/>
            <person name="Chao Q."/>
            <person name="Choy N."/>
            <person name="Enju A."/>
            <person name="Goldsmith A.D."/>
            <person name="Gurjal M."/>
            <person name="Hansen N.F."/>
            <person name="Hayashizaki Y."/>
            <person name="Johnson-Hopson C."/>
            <person name="Hsuan V.W."/>
            <person name="Iida K."/>
            <person name="Karnes M."/>
            <person name="Khan S."/>
            <person name="Koesema E."/>
            <person name="Ishida J."/>
            <person name="Jiang P.X."/>
            <person name="Jones T."/>
            <person name="Kawai J."/>
            <person name="Kamiya A."/>
            <person name="Meyers C."/>
            <person name="Nakajima M."/>
            <person name="Narusaka M."/>
            <person name="Seki M."/>
            <person name="Sakurai T."/>
            <person name="Satou M."/>
            <person name="Tamse R."/>
            <person name="Vaysberg M."/>
            <person name="Wallender E.K."/>
            <person name="Wong C."/>
            <person name="Yamamura Y."/>
            <person name="Yuan S."/>
            <person name="Shinozaki K."/>
            <person name="Davis R.W."/>
            <person name="Theologis A."/>
            <person name="Ecker J.R."/>
        </authorList>
    </citation>
    <scope>NUCLEOTIDE SEQUENCE [LARGE SCALE MRNA]</scope>
    <source>
        <strain>cv. Columbia</strain>
    </source>
</reference>
<reference key="4">
    <citation type="submission" date="2002-03" db="EMBL/GenBank/DDBJ databases">
        <title>Full-length cDNA from Arabidopsis thaliana.</title>
        <authorList>
            <person name="Brover V.V."/>
            <person name="Troukhan M.E."/>
            <person name="Alexandrov N.A."/>
            <person name="Lu Y.-P."/>
            <person name="Flavell R.B."/>
            <person name="Feldmann K.A."/>
        </authorList>
    </citation>
    <scope>NUCLEOTIDE SEQUENCE [LARGE SCALE MRNA]</scope>
</reference>
<reference key="5">
    <citation type="journal article" date="2003" name="Plant Physiol.">
        <title>Knock-out of the genes coding for the Rieske protein and the ATP-synthase delta-subunit of Arabidopsis. Effects on photosynthesis, thylakoid protein composition, and nuclear chloroplast gene expression.</title>
        <authorList>
            <person name="Maiwald D."/>
            <person name="Dietzmann A."/>
            <person name="Jahns P."/>
            <person name="Pesaresi P."/>
            <person name="Joliot P."/>
            <person name="Joliot A."/>
            <person name="Levin J.Z."/>
            <person name="Salamini F."/>
            <person name="Leister D."/>
        </authorList>
    </citation>
    <scope>FUNCTION</scope>
    <scope>DISRUPTION PHENOTYPE</scope>
    <source>
        <strain>cv. Columbia</strain>
    </source>
</reference>
<reference key="6">
    <citation type="journal article" date="2007" name="Planta">
        <title>Singlet oxygen affects the activity of the thylakoid ATP synthase and has a strong impact on its gamma subunit.</title>
        <authorList>
            <person name="Mahler H."/>
            <person name="Wuennenberg P."/>
            <person name="Linder M."/>
            <person name="Przybyla D."/>
            <person name="Zoerb C."/>
            <person name="Landgraf F."/>
            <person name="Forreiter C."/>
        </authorList>
    </citation>
    <scope>SUBCELLULAR LOCATION</scope>
    <scope>IDENTIFICATION BY MASS SPECTROMETRY</scope>
</reference>
<reference key="7">
    <citation type="journal article" date="2012" name="J. Proteome Res.">
        <title>Identification of phosphoproteins in Arabidopsis thaliana leaves using polyethylene glycol fractionation, immobilized metal-ion affinity chromatography, two-dimensional gel electrophoresis and mass spectrometry.</title>
        <authorList>
            <person name="Aryal U.K."/>
            <person name="Krochko J.E."/>
            <person name="Ross A.R."/>
        </authorList>
    </citation>
    <scope>PHOSPHORYLATION [LARGE SCALE ANALYSIS] AT THR-234</scope>
    <scope>IDENTIFICATION BY MASS SPECTROMETRY [LARGE SCALE ANALYSIS]</scope>
</reference>
<reference key="8">
    <citation type="journal article" date="2012" name="Mol. Cell. Proteomics">
        <title>Comparative large-scale characterisation of plant vs. mammal proteins reveals similar and idiosyncratic N-alpha acetylation features.</title>
        <authorList>
            <person name="Bienvenut W.V."/>
            <person name="Sumpton D."/>
            <person name="Martinez A."/>
            <person name="Lilla S."/>
            <person name="Espagne C."/>
            <person name="Meinnel T."/>
            <person name="Giglione C."/>
        </authorList>
    </citation>
    <scope>ACETYLATION [LARGE SCALE ANALYSIS] AT SER-48</scope>
    <scope>CLEAVAGE OF TRANSIT PEPTIDE [LARGE SCALE ANALYSIS] AFTER MET-47</scope>
    <scope>IDENTIFICATION BY MASS SPECTROMETRY [LARGE SCALE ANALYSIS]</scope>
</reference>
<proteinExistence type="evidence at protein level"/>
<accession>Q9SSS9</accession>
<accession>Q8RY87</accession>
<feature type="transit peptide" description="Chloroplast" evidence="11">
    <location>
        <begin position="1"/>
        <end position="47"/>
    </location>
</feature>
<feature type="chain" id="PRO_0000432101" description="ATP synthase subunit delta, chloroplastic" evidence="1">
    <location>
        <begin position="48"/>
        <end position="234"/>
    </location>
</feature>
<feature type="modified residue" description="N-acetylserine" evidence="11">
    <location>
        <position position="48"/>
    </location>
</feature>
<feature type="modified residue" description="Phosphothreonine" evidence="10">
    <location>
        <position position="234"/>
    </location>
</feature>
<feature type="glycosylation site" description="N-linked (GlcNAc...) asparagine" evidence="3">
    <location>
        <position position="66"/>
    </location>
</feature>